<keyword id="KW-0030">Aminoacyl-tRNA synthetase</keyword>
<keyword id="KW-0067">ATP-binding</keyword>
<keyword id="KW-0963">Cytoplasm</keyword>
<keyword id="KW-0436">Ligase</keyword>
<keyword id="KW-0547">Nucleotide-binding</keyword>
<keyword id="KW-0648">Protein biosynthesis</keyword>
<feature type="chain" id="PRO_1000051379" description="Asparagine--tRNA ligase">
    <location>
        <begin position="1"/>
        <end position="467"/>
    </location>
</feature>
<reference key="1">
    <citation type="journal article" date="2007" name="PLoS Biol.">
        <title>Evolution of symbiotic bacteria in the distal human intestine.</title>
        <authorList>
            <person name="Xu J."/>
            <person name="Mahowald M.A."/>
            <person name="Ley R.E."/>
            <person name="Lozupone C.A."/>
            <person name="Hamady M."/>
            <person name="Martens E.C."/>
            <person name="Henrissat B."/>
            <person name="Coutinho P.M."/>
            <person name="Minx P."/>
            <person name="Latreille P."/>
            <person name="Cordum H."/>
            <person name="Van Brunt A."/>
            <person name="Kim K."/>
            <person name="Fulton R.S."/>
            <person name="Fulton L.A."/>
            <person name="Clifton S.W."/>
            <person name="Wilson R.K."/>
            <person name="Knight R.D."/>
            <person name="Gordon J.I."/>
        </authorList>
    </citation>
    <scope>NUCLEOTIDE SEQUENCE [LARGE SCALE GENOMIC DNA]</scope>
    <source>
        <strain>ATCC 8482 / DSM 1447 / JCM 5826 / CCUG 4940 / NBRC 14291 / NCTC 11154</strain>
    </source>
</reference>
<accession>A6L0U5</accession>
<sequence>MEKISRTKIVDLLKRRDFGAMVNVKGWVRTRRGSKQVNFIALNDGSTINNVQIVVDLANFDEEMLKQITTGACISVNGELTESIGSGQAAEVQARGIEVLGTCDNTYPLQKKGHTMEFLREIAHLRPRTNTFGAVFRIRHNMAIAIHKFFHERGFFYFHTPIITASDCEGAGQMFQVTTKNLYDLKKDENGAIIYDDDFFGKQASLTVSGQLEGELAATALGAIYTFGPTFRAENSNTPRHLAEFWMIEPEVAFNDITDNMDLAEDFIKYCVQWALDNCYDDVKFLNDMFDKGLIERLQGVLKEEFVRLPYTEGIKILEEAVVKGHKFEFPVYWGVDLASEHERYLVEEHFKRPVILTDYPKEIKAFYMKQNEDGKTVRAMDVLFPKIGEIIGGSEREADYDKLMTRIQELGIPMKDMWWYLDTRKFGSCPHSGFGLGFERLLLFVTGMTNIRDVIPFPRTPRNAEF</sequence>
<gene>
    <name evidence="1" type="primary">asnS</name>
    <name type="ordered locus">BVU_1628</name>
</gene>
<name>SYN_PHOV8</name>
<proteinExistence type="inferred from homology"/>
<comment type="catalytic activity">
    <reaction evidence="1">
        <text>tRNA(Asn) + L-asparagine + ATP = L-asparaginyl-tRNA(Asn) + AMP + diphosphate + H(+)</text>
        <dbReference type="Rhea" id="RHEA:11180"/>
        <dbReference type="Rhea" id="RHEA-COMP:9659"/>
        <dbReference type="Rhea" id="RHEA-COMP:9674"/>
        <dbReference type="ChEBI" id="CHEBI:15378"/>
        <dbReference type="ChEBI" id="CHEBI:30616"/>
        <dbReference type="ChEBI" id="CHEBI:33019"/>
        <dbReference type="ChEBI" id="CHEBI:58048"/>
        <dbReference type="ChEBI" id="CHEBI:78442"/>
        <dbReference type="ChEBI" id="CHEBI:78515"/>
        <dbReference type="ChEBI" id="CHEBI:456215"/>
        <dbReference type="EC" id="6.1.1.22"/>
    </reaction>
</comment>
<comment type="subunit">
    <text evidence="1">Homodimer.</text>
</comment>
<comment type="subcellular location">
    <subcellularLocation>
        <location evidence="1">Cytoplasm</location>
    </subcellularLocation>
</comment>
<comment type="similarity">
    <text evidence="1">Belongs to the class-II aminoacyl-tRNA synthetase family.</text>
</comment>
<dbReference type="EC" id="6.1.1.22" evidence="1"/>
<dbReference type="EMBL" id="CP000139">
    <property type="protein sequence ID" value="ABR39309.1"/>
    <property type="molecule type" value="Genomic_DNA"/>
</dbReference>
<dbReference type="RefSeq" id="WP_005839184.1">
    <property type="nucleotide sequence ID" value="NZ_JANSWM010000064.1"/>
</dbReference>
<dbReference type="SMR" id="A6L0U5"/>
<dbReference type="STRING" id="435590.BVU_1628"/>
<dbReference type="PaxDb" id="435590-BVU_1628"/>
<dbReference type="GeneID" id="5302594"/>
<dbReference type="KEGG" id="bvu:BVU_1628"/>
<dbReference type="eggNOG" id="COG0017">
    <property type="taxonomic scope" value="Bacteria"/>
</dbReference>
<dbReference type="HOGENOM" id="CLU_004553_2_0_10"/>
<dbReference type="BioCyc" id="BVUL435590:G1G59-1713-MONOMER"/>
<dbReference type="Proteomes" id="UP000002861">
    <property type="component" value="Chromosome"/>
</dbReference>
<dbReference type="GO" id="GO:0005737">
    <property type="term" value="C:cytoplasm"/>
    <property type="evidence" value="ECO:0007669"/>
    <property type="project" value="UniProtKB-SubCell"/>
</dbReference>
<dbReference type="GO" id="GO:0004816">
    <property type="term" value="F:asparagine-tRNA ligase activity"/>
    <property type="evidence" value="ECO:0007669"/>
    <property type="project" value="UniProtKB-UniRule"/>
</dbReference>
<dbReference type="GO" id="GO:0005524">
    <property type="term" value="F:ATP binding"/>
    <property type="evidence" value="ECO:0007669"/>
    <property type="project" value="UniProtKB-UniRule"/>
</dbReference>
<dbReference type="GO" id="GO:0003676">
    <property type="term" value="F:nucleic acid binding"/>
    <property type="evidence" value="ECO:0007669"/>
    <property type="project" value="InterPro"/>
</dbReference>
<dbReference type="GO" id="GO:0006421">
    <property type="term" value="P:asparaginyl-tRNA aminoacylation"/>
    <property type="evidence" value="ECO:0007669"/>
    <property type="project" value="UniProtKB-UniRule"/>
</dbReference>
<dbReference type="CDD" id="cd00776">
    <property type="entry name" value="AsxRS_core"/>
    <property type="match status" value="1"/>
</dbReference>
<dbReference type="CDD" id="cd04318">
    <property type="entry name" value="EcAsnRS_like_N"/>
    <property type="match status" value="1"/>
</dbReference>
<dbReference type="FunFam" id="3.30.930.10:FF:000016">
    <property type="entry name" value="Asparagine--tRNA ligase"/>
    <property type="match status" value="1"/>
</dbReference>
<dbReference type="Gene3D" id="3.30.930.10">
    <property type="entry name" value="Bira Bifunctional Protein, Domain 2"/>
    <property type="match status" value="1"/>
</dbReference>
<dbReference type="Gene3D" id="2.40.50.140">
    <property type="entry name" value="Nucleic acid-binding proteins"/>
    <property type="match status" value="1"/>
</dbReference>
<dbReference type="HAMAP" id="MF_00534">
    <property type="entry name" value="Asn_tRNA_synth"/>
    <property type="match status" value="1"/>
</dbReference>
<dbReference type="InterPro" id="IPR004364">
    <property type="entry name" value="Aa-tRNA-synt_II"/>
</dbReference>
<dbReference type="InterPro" id="IPR006195">
    <property type="entry name" value="aa-tRNA-synth_II"/>
</dbReference>
<dbReference type="InterPro" id="IPR045864">
    <property type="entry name" value="aa-tRNA-synth_II/BPL/LPL"/>
</dbReference>
<dbReference type="InterPro" id="IPR004522">
    <property type="entry name" value="Asn-tRNA-ligase"/>
</dbReference>
<dbReference type="InterPro" id="IPR002312">
    <property type="entry name" value="Asp/Asn-tRNA-synth_IIb"/>
</dbReference>
<dbReference type="InterPro" id="IPR012340">
    <property type="entry name" value="NA-bd_OB-fold"/>
</dbReference>
<dbReference type="InterPro" id="IPR004365">
    <property type="entry name" value="NA-bd_OB_tRNA"/>
</dbReference>
<dbReference type="NCBIfam" id="TIGR00457">
    <property type="entry name" value="asnS"/>
    <property type="match status" value="1"/>
</dbReference>
<dbReference type="NCBIfam" id="NF003037">
    <property type="entry name" value="PRK03932.1"/>
    <property type="match status" value="1"/>
</dbReference>
<dbReference type="PANTHER" id="PTHR22594:SF34">
    <property type="entry name" value="ASPARAGINE--TRNA LIGASE, MITOCHONDRIAL-RELATED"/>
    <property type="match status" value="1"/>
</dbReference>
<dbReference type="PANTHER" id="PTHR22594">
    <property type="entry name" value="ASPARTYL/LYSYL-TRNA SYNTHETASE"/>
    <property type="match status" value="1"/>
</dbReference>
<dbReference type="Pfam" id="PF00152">
    <property type="entry name" value="tRNA-synt_2"/>
    <property type="match status" value="1"/>
</dbReference>
<dbReference type="Pfam" id="PF01336">
    <property type="entry name" value="tRNA_anti-codon"/>
    <property type="match status" value="1"/>
</dbReference>
<dbReference type="PRINTS" id="PR01042">
    <property type="entry name" value="TRNASYNTHASP"/>
</dbReference>
<dbReference type="SUPFAM" id="SSF55681">
    <property type="entry name" value="Class II aaRS and biotin synthetases"/>
    <property type="match status" value="1"/>
</dbReference>
<dbReference type="SUPFAM" id="SSF50249">
    <property type="entry name" value="Nucleic acid-binding proteins"/>
    <property type="match status" value="1"/>
</dbReference>
<dbReference type="PROSITE" id="PS50862">
    <property type="entry name" value="AA_TRNA_LIGASE_II"/>
    <property type="match status" value="1"/>
</dbReference>
<protein>
    <recommendedName>
        <fullName evidence="1">Asparagine--tRNA ligase</fullName>
        <ecNumber evidence="1">6.1.1.22</ecNumber>
    </recommendedName>
    <alternativeName>
        <fullName evidence="1">Asparaginyl-tRNA synthetase</fullName>
        <shortName evidence="1">AsnRS</shortName>
    </alternativeName>
</protein>
<evidence type="ECO:0000255" key="1">
    <source>
        <dbReference type="HAMAP-Rule" id="MF_00534"/>
    </source>
</evidence>
<organism>
    <name type="scientific">Phocaeicola vulgatus (strain ATCC 8482 / DSM 1447 / JCM 5826 / CCUG 4940 / NBRC 14291 / NCTC 11154)</name>
    <name type="common">Bacteroides vulgatus</name>
    <dbReference type="NCBI Taxonomy" id="435590"/>
    <lineage>
        <taxon>Bacteria</taxon>
        <taxon>Pseudomonadati</taxon>
        <taxon>Bacteroidota</taxon>
        <taxon>Bacteroidia</taxon>
        <taxon>Bacteroidales</taxon>
        <taxon>Bacteroidaceae</taxon>
        <taxon>Phocaeicola</taxon>
    </lineage>
</organism>